<evidence type="ECO:0000269" key="1">
    <source>
    </source>
</evidence>
<evidence type="ECO:0000303" key="2">
    <source>
    </source>
</evidence>
<evidence type="ECO:0000305" key="3"/>
<keyword id="KW-0903">Direct protein sequencing</keyword>
<accession>P82936</accession>
<feature type="chain" id="PRO_0000278136" description="Unknown endosperm protein W">
    <location>
        <begin position="1"/>
        <end position="15" status="greater than"/>
    </location>
</feature>
<feature type="unsure residue" description="T or A" evidence="1">
    <location>
        <position position="1"/>
    </location>
</feature>
<feature type="non-terminal residue" evidence="2">
    <location>
        <position position="15"/>
    </location>
</feature>
<reference evidence="3" key="1">
    <citation type="journal article" date="2000" name="Electrophoresis">
        <title>Separation and characterization of basic barley seed proteins.</title>
        <authorList>
            <person name="Kristoffersen H.E."/>
            <person name="Flengsrud R."/>
        </authorList>
    </citation>
    <scope>PROTEIN SEQUENCE</scope>
    <source>
        <strain evidence="1">cv. Bomi</strain>
        <tissue evidence="1">Starchy endosperm</tissue>
    </source>
</reference>
<comment type="miscellaneous">
    <text evidence="1">On the 2D-gel the determined pI of this unknown protein is: 7.0-7.5, its MW is: 118.9 kDa.</text>
</comment>
<name>UEPW_HORVU</name>
<sequence length="15" mass="1902">TIFLQQQQQQQQQQQ</sequence>
<protein>
    <recommendedName>
        <fullName>Unknown endosperm protein W</fullName>
    </recommendedName>
</protein>
<proteinExistence type="evidence at protein level"/>
<organism>
    <name type="scientific">Hordeum vulgare</name>
    <name type="common">Barley</name>
    <dbReference type="NCBI Taxonomy" id="4513"/>
    <lineage>
        <taxon>Eukaryota</taxon>
        <taxon>Viridiplantae</taxon>
        <taxon>Streptophyta</taxon>
        <taxon>Embryophyta</taxon>
        <taxon>Tracheophyta</taxon>
        <taxon>Spermatophyta</taxon>
        <taxon>Magnoliopsida</taxon>
        <taxon>Liliopsida</taxon>
        <taxon>Poales</taxon>
        <taxon>Poaceae</taxon>
        <taxon>BOP clade</taxon>
        <taxon>Pooideae</taxon>
        <taxon>Triticodae</taxon>
        <taxon>Triticeae</taxon>
        <taxon>Hordeinae</taxon>
        <taxon>Hordeum</taxon>
    </lineage>
</organism>